<organism>
    <name type="scientific">Rattus norvegicus</name>
    <name type="common">Rat</name>
    <dbReference type="NCBI Taxonomy" id="10116"/>
    <lineage>
        <taxon>Eukaryota</taxon>
        <taxon>Metazoa</taxon>
        <taxon>Chordata</taxon>
        <taxon>Craniata</taxon>
        <taxon>Vertebrata</taxon>
        <taxon>Euteleostomi</taxon>
        <taxon>Mammalia</taxon>
        <taxon>Eutheria</taxon>
        <taxon>Euarchontoglires</taxon>
        <taxon>Glires</taxon>
        <taxon>Rodentia</taxon>
        <taxon>Myomorpha</taxon>
        <taxon>Muroidea</taxon>
        <taxon>Muridae</taxon>
        <taxon>Murinae</taxon>
        <taxon>Rattus</taxon>
    </lineage>
</organism>
<gene>
    <name type="primary">Nae1</name>
    <name type="synonym">Appbp1</name>
</gene>
<accession>Q9Z1A5</accession>
<name>ULA1_RAT</name>
<reference key="1">
    <citation type="submission" date="1997-02" db="EMBL/GenBank/DDBJ databases">
        <title>Localization of the amyloid protein precursor binding protein, APP-BP1, in the developing central nervous system.</title>
        <authorList>
            <person name="Chow N."/>
            <person name="Mobley W.C."/>
            <person name="Dreger U.C."/>
            <person name="Coopersmith R."/>
            <person name="Neve R.L."/>
        </authorList>
    </citation>
    <scope>NUCLEOTIDE SEQUENCE [MRNA]</scope>
    <source>
        <strain>Sprague-Dawley</strain>
    </source>
</reference>
<reference key="2">
    <citation type="journal article" date="1996" name="J. Biol. Chem.">
        <title>APP-BP1, a novel protein that binds to the carboxyl-terminal region of the amyloid precursor protein.</title>
        <authorList>
            <person name="Chow N."/>
            <person name="Korenberg J.R."/>
            <person name="Chen X.-N."/>
            <person name="Neve R.L."/>
        </authorList>
    </citation>
    <scope>TISSUE SPECIFICITY</scope>
</reference>
<reference key="3">
    <citation type="journal article" date="2003" name="J. Cell Biol.">
        <title>APP-BP1 mediates APP-induced apoptosis and DNA synthesis and is increased in Alzheimer's disease brain.</title>
        <authorList>
            <person name="Chen Y."/>
            <person name="Liu W."/>
            <person name="McPhie D.L."/>
            <person name="Hassinger L."/>
            <person name="Neve R.L."/>
        </authorList>
    </citation>
    <scope>FUNCTION</scope>
    <scope>INTERACTION WITH APP</scope>
    <scope>SUBCELLULAR LOCATION</scope>
</reference>
<comment type="function">
    <text evidence="2 4">Regulatory subunit of the dimeric UBA3-NAE1 E1 enzyme. E1 activates NEDD8 by first adenylating its C-terminal glycine residue with ATP, thereafter linking this residue to the side chain of the catalytic cysteine, yielding a NEDD8-UBA3 thioester and free AMP. E1 finally transfers NEDD8 to the catalytic cysteine of UBE2M. Necessary for cell cycle progression through the S-M checkpoint. Overexpression of NAE1 causes apoptosis through deregulation of NEDD8 conjugation (PubMed:14557245). The covalent attachment of NEDD8 to target proteins is known as 'neddylation' and the process is involved in the regulation of cell growth, viability and development.</text>
</comment>
<comment type="activity regulation">
    <text evidence="1">Binding of TP53BP2 to the regulatory subunit NAE1 decreases neddylation activity.</text>
</comment>
<comment type="pathway">
    <text>Protein modification; protein neddylation.</text>
</comment>
<comment type="subunit">
    <text>Heterodimer of UBA3 and NAE1. The complex binds NEDD8 and UBE2M. Binds APP and TP53BP2.</text>
</comment>
<comment type="subcellular location">
    <subcellularLocation>
        <location evidence="4">Cell membrane</location>
    </subcellularLocation>
    <text>Colocalizes with APP in lipid rafts.</text>
</comment>
<comment type="tissue specificity">
    <text evidence="5">Expressed throughout the brain. In hippocampus, strongly expressed in granule cells and in the pyramidal cell layer. Strongly expressed in the piriform cortex. In the cerebellum, expressed only in Purkinje cells.</text>
</comment>
<comment type="PTM">
    <text evidence="1">Ubiquitinated by TRIP12, leading to its degradation by the proteasome.</text>
</comment>
<comment type="similarity">
    <text evidence="6">Belongs to the ubiquitin-activating E1 family. ULA1 subfamily.</text>
</comment>
<sequence>MAQQGKILKEQKYDRQLRLWGDHGQEALESAHVCLINATATGTEILKNLVLPGIGSFTIIDGNQVSGEDVGNNFFLQKCSIGKNRAQAAMEFLQELNSDVSGSFVEESPENLLDNDPSFFCRFTIVVATQLLESTLLRLADVLWNSQIPLLICRTYGLVGYMRIIIKEHPVIESHPDNALEDLRLDKPFPELREHFQSYDLDHMEKKDHSHTPWIVIIAKYLAQWYSETNGRIPKSYKEKEDFRELIRQGILKNENGAPEDEENFEEAIKNVNTALNTTQIPSSIEDIFNDDRCINITKQTPSFWILARALKEFVAKEGQGNLPVRGTIPDMIADSNKYIKLQNVYREKAKKDAAAVGNHVAKLLQSCGQAPESISEKELKLLCSNSAFLRVVRCRSLAEEYGLHTVNKDEIISSMDNPDNEIVLYLMLRAVDRFHKQHGRYPGVSNYQVEEDIGKLKSCLTGFLQEYGLSVMVKDDYVHEFCRYGAAEPHTVAAFLGGAAAQEVIKIITKQFVIFNNTYIYSGMSQTSATFQL</sequence>
<proteinExistence type="evidence at protein level"/>
<dbReference type="EMBL" id="U90829">
    <property type="protein sequence ID" value="AAD09247.1"/>
    <property type="molecule type" value="mRNA"/>
</dbReference>
<dbReference type="SMR" id="Q9Z1A5"/>
<dbReference type="FunCoup" id="Q9Z1A5">
    <property type="interactions" value="3867"/>
</dbReference>
<dbReference type="STRING" id="10116.ENSRNOP00000045593"/>
<dbReference type="iPTMnet" id="Q9Z1A5"/>
<dbReference type="PhosphoSitePlus" id="Q9Z1A5"/>
<dbReference type="jPOST" id="Q9Z1A5"/>
<dbReference type="PaxDb" id="10116-ENSRNOP00000045593"/>
<dbReference type="UCSC" id="RGD:619945">
    <property type="organism name" value="rat"/>
</dbReference>
<dbReference type="AGR" id="RGD:619945"/>
<dbReference type="RGD" id="619945">
    <property type="gene designation" value="Nae1"/>
</dbReference>
<dbReference type="eggNOG" id="KOG2016">
    <property type="taxonomic scope" value="Eukaryota"/>
</dbReference>
<dbReference type="InParanoid" id="Q9Z1A5"/>
<dbReference type="PhylomeDB" id="Q9Z1A5"/>
<dbReference type="Reactome" id="R-RNO-8951664">
    <property type="pathway name" value="Neddylation"/>
</dbReference>
<dbReference type="UniPathway" id="UPA00885"/>
<dbReference type="PRO" id="PR:Q9Z1A5"/>
<dbReference type="Proteomes" id="UP000002494">
    <property type="component" value="Unplaced"/>
</dbReference>
<dbReference type="GO" id="GO:0005769">
    <property type="term" value="C:early endosome"/>
    <property type="evidence" value="ECO:0000314"/>
    <property type="project" value="RGD"/>
</dbReference>
<dbReference type="GO" id="GO:0098978">
    <property type="term" value="C:glutamatergic synapse"/>
    <property type="evidence" value="ECO:0000266"/>
    <property type="project" value="RGD"/>
</dbReference>
<dbReference type="GO" id="GO:0005886">
    <property type="term" value="C:plasma membrane"/>
    <property type="evidence" value="ECO:0007669"/>
    <property type="project" value="UniProtKB-SubCell"/>
</dbReference>
<dbReference type="GO" id="GO:0032991">
    <property type="term" value="C:protein-containing complex"/>
    <property type="evidence" value="ECO:0000266"/>
    <property type="project" value="RGD"/>
</dbReference>
<dbReference type="GO" id="GO:0019781">
    <property type="term" value="F:NEDD8 activating enzyme activity"/>
    <property type="evidence" value="ECO:0007669"/>
    <property type="project" value="InterPro"/>
</dbReference>
<dbReference type="GO" id="GO:0046982">
    <property type="term" value="F:protein heterodimerization activity"/>
    <property type="evidence" value="ECO:0000266"/>
    <property type="project" value="RGD"/>
</dbReference>
<dbReference type="GO" id="GO:0031625">
    <property type="term" value="F:ubiquitin protein ligase binding"/>
    <property type="evidence" value="ECO:0000266"/>
    <property type="project" value="RGD"/>
</dbReference>
<dbReference type="GO" id="GO:0033314">
    <property type="term" value="P:mitotic DNA replication checkpoint signaling"/>
    <property type="evidence" value="ECO:0000266"/>
    <property type="project" value="RGD"/>
</dbReference>
<dbReference type="GO" id="GO:0051402">
    <property type="term" value="P:neuron apoptotic process"/>
    <property type="evidence" value="ECO:0000266"/>
    <property type="project" value="RGD"/>
</dbReference>
<dbReference type="GO" id="GO:0045116">
    <property type="term" value="P:protein neddylation"/>
    <property type="evidence" value="ECO:0000250"/>
    <property type="project" value="UniProtKB"/>
</dbReference>
<dbReference type="GO" id="GO:0042981">
    <property type="term" value="P:regulation of apoptotic process"/>
    <property type="evidence" value="ECO:0000266"/>
    <property type="project" value="RGD"/>
</dbReference>
<dbReference type="GO" id="GO:0043523">
    <property type="term" value="P:regulation of neuron apoptotic process"/>
    <property type="evidence" value="ECO:0000266"/>
    <property type="project" value="RGD"/>
</dbReference>
<dbReference type="GO" id="GO:0150052">
    <property type="term" value="P:regulation of postsynapse assembly"/>
    <property type="evidence" value="ECO:0000266"/>
    <property type="project" value="RGD"/>
</dbReference>
<dbReference type="CDD" id="cd01493">
    <property type="entry name" value="APPBP1_RUB"/>
    <property type="match status" value="1"/>
</dbReference>
<dbReference type="FunFam" id="3.40.50.720:FF:000174">
    <property type="entry name" value="NEDD8-activating enzyme E1 regulatory subunit"/>
    <property type="match status" value="1"/>
</dbReference>
<dbReference type="FunFam" id="3.40.50.720:FF:000187">
    <property type="entry name" value="NEDD8-activating enzyme E1 regulatory subunit"/>
    <property type="match status" value="1"/>
</dbReference>
<dbReference type="Gene3D" id="3.40.50.720">
    <property type="entry name" value="NAD(P)-binding Rossmann-like Domain"/>
    <property type="match status" value="2"/>
</dbReference>
<dbReference type="InterPro" id="IPR030667">
    <property type="entry name" value="APP-BP1"/>
</dbReference>
<dbReference type="InterPro" id="IPR045886">
    <property type="entry name" value="ThiF/MoeB/HesA"/>
</dbReference>
<dbReference type="InterPro" id="IPR000594">
    <property type="entry name" value="ThiF_NAD_FAD-bd"/>
</dbReference>
<dbReference type="InterPro" id="IPR035985">
    <property type="entry name" value="Ubiquitin-activating_enz"/>
</dbReference>
<dbReference type="PANTHER" id="PTHR10953:SF29">
    <property type="entry name" value="NEDD8-ACTIVATING ENZYME E1 REGULATORY SUBUNIT"/>
    <property type="match status" value="1"/>
</dbReference>
<dbReference type="PANTHER" id="PTHR10953">
    <property type="entry name" value="UBIQUITIN-ACTIVATING ENZYME E1"/>
    <property type="match status" value="1"/>
</dbReference>
<dbReference type="Pfam" id="PF00899">
    <property type="entry name" value="ThiF"/>
    <property type="match status" value="1"/>
</dbReference>
<dbReference type="PIRSF" id="PIRSF039099">
    <property type="entry name" value="APP-BP1"/>
    <property type="match status" value="1"/>
</dbReference>
<dbReference type="SUPFAM" id="SSF69572">
    <property type="entry name" value="Activating enzymes of the ubiquitin-like proteins"/>
    <property type="match status" value="1"/>
</dbReference>
<evidence type="ECO:0000250" key="1"/>
<evidence type="ECO:0000250" key="2">
    <source>
        <dbReference type="UniProtKB" id="Q13564"/>
    </source>
</evidence>
<evidence type="ECO:0000250" key="3">
    <source>
        <dbReference type="UniProtKB" id="Q8VBW6"/>
    </source>
</evidence>
<evidence type="ECO:0000269" key="4">
    <source>
    </source>
</evidence>
<evidence type="ECO:0000269" key="5">
    <source>
    </source>
</evidence>
<evidence type="ECO:0000305" key="6"/>
<protein>
    <recommendedName>
        <fullName>NEDD8-activating enzyme E1 regulatory subunit</fullName>
    </recommendedName>
    <alternativeName>
        <fullName>Amyloid beta precursor protein-binding protein 1, 59 kDa</fullName>
        <shortName>APP-BP1</shortName>
    </alternativeName>
    <alternativeName>
        <fullName>Amyloid protein-binding protein 1</fullName>
    </alternativeName>
</protein>
<feature type="initiator methionine" description="Removed" evidence="2">
    <location>
        <position position="1"/>
    </location>
</feature>
<feature type="chain" id="PRO_0000194954" description="NEDD8-activating enzyme E1 regulatory subunit">
    <location>
        <begin position="2"/>
        <end position="534"/>
    </location>
</feature>
<feature type="region of interest" description="Interaction with UBA3" evidence="1">
    <location>
        <begin position="331"/>
        <end position="344"/>
    </location>
</feature>
<feature type="site" description="Interaction with UBA3" evidence="1">
    <location>
        <position position="211"/>
    </location>
</feature>
<feature type="modified residue" description="N-acetylalanine" evidence="2">
    <location>
        <position position="2"/>
    </location>
</feature>
<feature type="modified residue" description="N6-acetyllysine" evidence="2">
    <location>
        <position position="6"/>
    </location>
</feature>
<feature type="modified residue" description="N6-acetyllysine" evidence="3">
    <location>
        <position position="341"/>
    </location>
</feature>
<keyword id="KW-0007">Acetylation</keyword>
<keyword id="KW-0053">Apoptosis</keyword>
<keyword id="KW-0131">Cell cycle</keyword>
<keyword id="KW-1003">Cell membrane</keyword>
<keyword id="KW-0472">Membrane</keyword>
<keyword id="KW-1185">Reference proteome</keyword>
<keyword id="KW-0832">Ubl conjugation</keyword>
<keyword id="KW-0833">Ubl conjugation pathway</keyword>